<evidence type="ECO:0000255" key="1">
    <source>
        <dbReference type="PROSITE-ProRule" id="PRU10023"/>
    </source>
</evidence>
<evidence type="ECO:0000305" key="2"/>
<evidence type="ECO:0007829" key="3">
    <source>
        <dbReference type="PDB" id="7BUR"/>
    </source>
</evidence>
<evidence type="ECO:0007829" key="4">
    <source>
        <dbReference type="PDB" id="7BUS"/>
    </source>
</evidence>
<feature type="chain" id="PRO_0000216062" description="Chalcone synthase 1">
    <location>
        <begin position="1"/>
        <end position="388"/>
    </location>
</feature>
<feature type="active site" evidence="1">
    <location>
        <position position="164"/>
    </location>
</feature>
<feature type="helix" evidence="3">
    <location>
        <begin position="4"/>
        <end position="11"/>
    </location>
</feature>
<feature type="strand" evidence="3">
    <location>
        <begin position="18"/>
        <end position="25"/>
    </location>
</feature>
<feature type="strand" evidence="3">
    <location>
        <begin position="28"/>
        <end position="33"/>
    </location>
</feature>
<feature type="helix" evidence="3">
    <location>
        <begin position="36"/>
        <end position="43"/>
    </location>
</feature>
<feature type="helix" evidence="3">
    <location>
        <begin position="50"/>
        <end position="62"/>
    </location>
</feature>
<feature type="strand" evidence="3">
    <location>
        <begin position="67"/>
        <end position="71"/>
    </location>
</feature>
<feature type="helix" evidence="3">
    <location>
        <begin position="74"/>
        <end position="79"/>
    </location>
</feature>
<feature type="helix" evidence="3">
    <location>
        <begin position="81"/>
        <end position="84"/>
    </location>
</feature>
<feature type="strand" evidence="3">
    <location>
        <begin position="85"/>
        <end position="87"/>
    </location>
</feature>
<feature type="helix" evidence="3">
    <location>
        <begin position="91"/>
        <end position="117"/>
    </location>
</feature>
<feature type="helix" evidence="3">
    <location>
        <begin position="121"/>
        <end position="123"/>
    </location>
</feature>
<feature type="strand" evidence="3">
    <location>
        <begin position="126"/>
        <end position="133"/>
    </location>
</feature>
<feature type="strand" evidence="3">
    <location>
        <begin position="136"/>
        <end position="138"/>
    </location>
</feature>
<feature type="helix" evidence="3">
    <location>
        <begin position="140"/>
        <end position="148"/>
    </location>
</feature>
<feature type="strand" evidence="3">
    <location>
        <begin position="155"/>
        <end position="161"/>
    </location>
</feature>
<feature type="helix" evidence="3">
    <location>
        <begin position="166"/>
        <end position="179"/>
    </location>
</feature>
<feature type="strand" evidence="3">
    <location>
        <begin position="185"/>
        <end position="192"/>
    </location>
</feature>
<feature type="helix" evidence="3">
    <location>
        <begin position="194"/>
        <end position="196"/>
    </location>
</feature>
<feature type="helix" evidence="3">
    <location>
        <begin position="206"/>
        <end position="214"/>
    </location>
</feature>
<feature type="strand" evidence="3">
    <location>
        <begin position="218"/>
        <end position="227"/>
    </location>
</feature>
<feature type="strand" evidence="3">
    <location>
        <begin position="236"/>
        <end position="245"/>
    </location>
</feature>
<feature type="strand" evidence="3">
    <location>
        <begin position="252"/>
        <end position="258"/>
    </location>
</feature>
<feature type="strand" evidence="3">
    <location>
        <begin position="261"/>
        <end position="266"/>
    </location>
</feature>
<feature type="helix" evidence="3">
    <location>
        <begin position="270"/>
        <end position="286"/>
    </location>
</feature>
<feature type="helix" evidence="3">
    <location>
        <begin position="287"/>
        <end position="289"/>
    </location>
</feature>
<feature type="strand" evidence="3">
    <location>
        <begin position="296"/>
        <end position="301"/>
    </location>
</feature>
<feature type="helix" evidence="3">
    <location>
        <begin position="306"/>
        <end position="316"/>
    </location>
</feature>
<feature type="turn" evidence="3">
    <location>
        <begin position="320"/>
        <end position="323"/>
    </location>
</feature>
<feature type="helix" evidence="3">
    <location>
        <begin position="324"/>
        <end position="333"/>
    </location>
</feature>
<feature type="helix" evidence="3">
    <location>
        <begin position="337"/>
        <end position="339"/>
    </location>
</feature>
<feature type="helix" evidence="3">
    <location>
        <begin position="340"/>
        <end position="354"/>
    </location>
</feature>
<feature type="turn" evidence="4">
    <location>
        <begin position="360"/>
        <end position="363"/>
    </location>
</feature>
<feature type="strand" evidence="3">
    <location>
        <begin position="364"/>
        <end position="373"/>
    </location>
</feature>
<feature type="turn" evidence="3">
    <location>
        <begin position="374"/>
        <end position="376"/>
    </location>
</feature>
<feature type="strand" evidence="3">
    <location>
        <begin position="377"/>
        <end position="385"/>
    </location>
</feature>
<dbReference type="EC" id="2.3.1.74"/>
<dbReference type="EMBL" id="X54644">
    <property type="protein sequence ID" value="CAA38456.1"/>
    <property type="molecule type" value="Genomic_DNA"/>
</dbReference>
<dbReference type="PIR" id="S15006">
    <property type="entry name" value="SYSYC1"/>
</dbReference>
<dbReference type="RefSeq" id="NP_001337038.1">
    <property type="nucleotide sequence ID" value="NM_001350109.1"/>
</dbReference>
<dbReference type="RefSeq" id="XP_003531225.1">
    <property type="nucleotide sequence ID" value="XM_003531177.3"/>
</dbReference>
<dbReference type="PDB" id="7BUR">
    <property type="method" value="X-ray"/>
    <property type="resolution" value="1.82 A"/>
    <property type="chains" value="A/B=1-388"/>
</dbReference>
<dbReference type="PDB" id="7BUS">
    <property type="method" value="X-ray"/>
    <property type="resolution" value="2.52 A"/>
    <property type="chains" value="A/B=1-388"/>
</dbReference>
<dbReference type="PDB" id="8JRD">
    <property type="method" value="X-ray"/>
    <property type="resolution" value="1.83 A"/>
    <property type="chains" value="A/B=1-388"/>
</dbReference>
<dbReference type="PDBsum" id="7BUR"/>
<dbReference type="PDBsum" id="7BUS"/>
<dbReference type="PDBsum" id="8JRD"/>
<dbReference type="SMR" id="P24826"/>
<dbReference type="STRING" id="3847.P24826"/>
<dbReference type="PaxDb" id="3847-GLYMA08G11620.1"/>
<dbReference type="EnsemblPlants" id="KRH42759">
    <property type="protein sequence ID" value="KRH42759"/>
    <property type="gene ID" value="GLYMA_08G109400"/>
</dbReference>
<dbReference type="GeneID" id="732575"/>
<dbReference type="Gramene" id="KRH42759">
    <property type="protein sequence ID" value="KRH42759"/>
    <property type="gene ID" value="GLYMA_08G109400"/>
</dbReference>
<dbReference type="eggNOG" id="ENOG502QRSY">
    <property type="taxonomic scope" value="Eukaryota"/>
</dbReference>
<dbReference type="HOGENOM" id="CLU_034992_2_0_1"/>
<dbReference type="InParanoid" id="P24826"/>
<dbReference type="OMA" id="GTMEMLA"/>
<dbReference type="OrthoDB" id="1854138at2759"/>
<dbReference type="UniPathway" id="UPA00154"/>
<dbReference type="Proteomes" id="UP000008827">
    <property type="component" value="Chromosome 8"/>
</dbReference>
<dbReference type="GO" id="GO:0016747">
    <property type="term" value="F:acyltransferase activity, transferring groups other than amino-acyl groups"/>
    <property type="evidence" value="ECO:0000318"/>
    <property type="project" value="GO_Central"/>
</dbReference>
<dbReference type="GO" id="GO:0016210">
    <property type="term" value="F:naringenin-chalcone synthase activity"/>
    <property type="evidence" value="ECO:0007669"/>
    <property type="project" value="UniProtKB-EC"/>
</dbReference>
<dbReference type="GO" id="GO:0009813">
    <property type="term" value="P:flavonoid biosynthetic process"/>
    <property type="evidence" value="ECO:0007669"/>
    <property type="project" value="UniProtKB-UniPathway"/>
</dbReference>
<dbReference type="GO" id="GO:0030639">
    <property type="term" value="P:polyketide biosynthetic process"/>
    <property type="evidence" value="ECO:0000318"/>
    <property type="project" value="GO_Central"/>
</dbReference>
<dbReference type="CDD" id="cd00831">
    <property type="entry name" value="CHS_like"/>
    <property type="match status" value="1"/>
</dbReference>
<dbReference type="FunFam" id="3.40.47.10:FF:000014">
    <property type="entry name" value="Chalcone synthase 1"/>
    <property type="match status" value="1"/>
</dbReference>
<dbReference type="FunFam" id="3.40.47.10:FF:000025">
    <property type="entry name" value="Chalcone synthase 2"/>
    <property type="match status" value="1"/>
</dbReference>
<dbReference type="Gene3D" id="3.40.47.10">
    <property type="match status" value="2"/>
</dbReference>
<dbReference type="InterPro" id="IPR012328">
    <property type="entry name" value="Chalcone/stilbene_synt_C"/>
</dbReference>
<dbReference type="InterPro" id="IPR001099">
    <property type="entry name" value="Chalcone/stilbene_synt_N"/>
</dbReference>
<dbReference type="InterPro" id="IPR018088">
    <property type="entry name" value="Chalcone/stilbene_synthase_AS"/>
</dbReference>
<dbReference type="InterPro" id="IPR011141">
    <property type="entry name" value="Polyketide_synthase_type-III"/>
</dbReference>
<dbReference type="InterPro" id="IPR016039">
    <property type="entry name" value="Thiolase-like"/>
</dbReference>
<dbReference type="PANTHER" id="PTHR11877:SF100">
    <property type="entry name" value="CHALCONE SYNTHASE 3"/>
    <property type="match status" value="1"/>
</dbReference>
<dbReference type="PANTHER" id="PTHR11877">
    <property type="entry name" value="HYDROXYMETHYLGLUTARYL-COA SYNTHASE"/>
    <property type="match status" value="1"/>
</dbReference>
<dbReference type="Pfam" id="PF02797">
    <property type="entry name" value="Chal_sti_synt_C"/>
    <property type="match status" value="1"/>
</dbReference>
<dbReference type="Pfam" id="PF00195">
    <property type="entry name" value="Chal_sti_synt_N"/>
    <property type="match status" value="1"/>
</dbReference>
<dbReference type="PIRSF" id="PIRSF000451">
    <property type="entry name" value="PKS_III"/>
    <property type="match status" value="1"/>
</dbReference>
<dbReference type="SUPFAM" id="SSF53901">
    <property type="entry name" value="Thiolase-like"/>
    <property type="match status" value="2"/>
</dbReference>
<dbReference type="PROSITE" id="PS00441">
    <property type="entry name" value="CHALCONE_SYNTH"/>
    <property type="match status" value="1"/>
</dbReference>
<keyword id="KW-0002">3D-structure</keyword>
<keyword id="KW-0012">Acyltransferase</keyword>
<keyword id="KW-0284">Flavonoid biosynthesis</keyword>
<keyword id="KW-1185">Reference proteome</keyword>
<keyword id="KW-0808">Transferase</keyword>
<sequence>MVSVEEIRKAQRAEGPATVMAIGTATPPNCVDQSTYPDYYFRITNSEHMTELKEKFKRMCDKSMIKKRYMYLNEEILKENPSVCAYMAPSLDARQDMVVVEVPKLGKEAATKAIKEWGQPKSKITHLIFCTTSGVDMPGADYQLTKLLGLRPSVKRYMMYQQGCFAGGTVLRLAKDLAENNKGARVLVVCSEITAVTFRGPTDTHLDSLVGQALFGDGAAAVIVGSDPLPVEKPLFQLVWTAQTILPDSEGAIDGHLREVGLTFHLLKDVPGLISKNIEKALVEAFQPLGISDYNSIFWIAHPGGPAILDQVEAKLGLKPEKMEATRHVLSEYGNMSSACVLFILDQMRKKSIENGLGTTGEGLDWGVLFGFGPGLTVETVVLRSVTL</sequence>
<gene>
    <name type="primary">CHS1</name>
</gene>
<name>CHS1_SOYBN</name>
<organism>
    <name type="scientific">Glycine max</name>
    <name type="common">Soybean</name>
    <name type="synonym">Glycine hispida</name>
    <dbReference type="NCBI Taxonomy" id="3847"/>
    <lineage>
        <taxon>Eukaryota</taxon>
        <taxon>Viridiplantae</taxon>
        <taxon>Streptophyta</taxon>
        <taxon>Embryophyta</taxon>
        <taxon>Tracheophyta</taxon>
        <taxon>Spermatophyta</taxon>
        <taxon>Magnoliopsida</taxon>
        <taxon>eudicotyledons</taxon>
        <taxon>Gunneridae</taxon>
        <taxon>Pentapetalae</taxon>
        <taxon>rosids</taxon>
        <taxon>fabids</taxon>
        <taxon>Fabales</taxon>
        <taxon>Fabaceae</taxon>
        <taxon>Papilionoideae</taxon>
        <taxon>50 kb inversion clade</taxon>
        <taxon>NPAAA clade</taxon>
        <taxon>indigoferoid/millettioid clade</taxon>
        <taxon>Phaseoleae</taxon>
        <taxon>Glycine</taxon>
        <taxon>Glycine subgen. Soja</taxon>
    </lineage>
</organism>
<proteinExistence type="evidence at protein level"/>
<reference key="1">
    <citation type="journal article" date="1991" name="Plant Mol. Biol.">
        <title>The nucleotide sequence of gene 1 of the soybean chalcone synthase multigene family.</title>
        <authorList>
            <person name="Akada S."/>
            <person name="Kung S.D."/>
            <person name="Dube S.K."/>
        </authorList>
    </citation>
    <scope>NUCLEOTIDE SEQUENCE [GENOMIC DNA]</scope>
    <source>
        <strain>cv. Williams</strain>
    </source>
</reference>
<protein>
    <recommendedName>
        <fullName>Chalcone synthase 1</fullName>
        <ecNumber>2.3.1.74</ecNumber>
    </recommendedName>
    <alternativeName>
        <fullName>Naringenin-chalcone synthase 1</fullName>
    </alternativeName>
</protein>
<comment type="function">
    <text>The primary product of this enzyme is 4,2',4',6'-tetrahydroxychalcone (also termed naringenin-chalcone or chalcone) which can under specific conditions spontaneously isomerize into naringenin.</text>
</comment>
<comment type="catalytic activity">
    <reaction evidence="1">
        <text>(E)-4-coumaroyl-CoA + 3 malonyl-CoA + 3 H(+) = 2',4,4',6'-tetrahydroxychalcone + 3 CO2 + 4 CoA</text>
        <dbReference type="Rhea" id="RHEA:11128"/>
        <dbReference type="ChEBI" id="CHEBI:15378"/>
        <dbReference type="ChEBI" id="CHEBI:15413"/>
        <dbReference type="ChEBI" id="CHEBI:16526"/>
        <dbReference type="ChEBI" id="CHEBI:57287"/>
        <dbReference type="ChEBI" id="CHEBI:57384"/>
        <dbReference type="ChEBI" id="CHEBI:85008"/>
        <dbReference type="EC" id="2.3.1.74"/>
    </reaction>
</comment>
<comment type="pathway">
    <text>Secondary metabolite biosynthesis; flavonoid biosynthesis.</text>
</comment>
<comment type="similarity">
    <text evidence="2">Belongs to the thiolase-like superfamily. Chalcone/stilbene synthases family.</text>
</comment>
<accession>P24826</accession>